<comment type="function">
    <text evidence="1">Cleaved by the protease thrombin to yield monomers which, together with fibrinogen alpha (FGA) and fibrinogen gamma (FGG), polymerize to form an insoluble fibrin matrix. Fibrin has a major function in hemostasis as one of the primary components of blood clots.</text>
</comment>
<comment type="subunit">
    <text evidence="2">Heterohexamer; disulfide linked. Contains 2 sets of 3 non-identical chains (alpha, beta and gamma). The 2 heterotrimers are in head to head conformation with the N-termini in a small central domain (By similarity).</text>
</comment>
<comment type="subcellular location">
    <subcellularLocation>
        <location>Secreted</location>
    </subcellularLocation>
</comment>
<comment type="domain">
    <text evidence="2">A long coiled coil structure formed by 3 polypeptide chains connects the central nodule to the C-terminal domains (distal nodules). The long C-terminal ends of the alpha chains fold back, contributing a fourth strand to the coiled coil structure.</text>
</comment>
<comment type="PTM">
    <text>Conversion of fibrinogen to fibrin is triggered by thrombin, which cleaves fibrinopeptides A and B from alpha and beta chains, and thus exposes the N-terminal polymerization sites responsible for the formation of the soft clot.</text>
</comment>
<protein>
    <recommendedName>
        <fullName>Fibrinogen beta chain</fullName>
    </recommendedName>
    <component>
        <recommendedName>
            <fullName>Fibrinopeptide B</fullName>
        </recommendedName>
    </component>
</protein>
<accession>P12802</accession>
<gene>
    <name type="primary">FGB</name>
</gene>
<dbReference type="PIR" id="JP0102">
    <property type="entry name" value="JP0102"/>
</dbReference>
<dbReference type="Proteomes" id="UP000694400">
    <property type="component" value="Unplaced"/>
</dbReference>
<dbReference type="GO" id="GO:0005576">
    <property type="term" value="C:extracellular region"/>
    <property type="evidence" value="ECO:0007669"/>
    <property type="project" value="UniProtKB-SubCell"/>
</dbReference>
<dbReference type="GO" id="GO:0007596">
    <property type="term" value="P:blood coagulation"/>
    <property type="evidence" value="ECO:0007669"/>
    <property type="project" value="UniProtKB-KW"/>
</dbReference>
<evidence type="ECO:0000250" key="1">
    <source>
        <dbReference type="UniProtKB" id="E9PV24"/>
    </source>
</evidence>
<evidence type="ECO:0000250" key="2">
    <source>
        <dbReference type="UniProtKB" id="P02675"/>
    </source>
</evidence>
<evidence type="ECO:0000269" key="3">
    <source>
    </source>
</evidence>
<name>FIBB_ANAPL</name>
<keyword id="KW-0094">Blood coagulation</keyword>
<keyword id="KW-0175">Coiled coil</keyword>
<keyword id="KW-0903">Direct protein sequencing</keyword>
<keyword id="KW-1015">Disulfide bond</keyword>
<keyword id="KW-0356">Hemostasis</keyword>
<keyword id="KW-0873">Pyrrolidone carboxylic acid</keyword>
<keyword id="KW-0964">Secreted</keyword>
<keyword id="KW-0765">Sulfation</keyword>
<feature type="peptide" id="PRO_0000009092" description="Fibrinopeptide B">
    <location>
        <begin position="1"/>
        <end position="18"/>
    </location>
</feature>
<feature type="modified residue" description="Pyrrolidone carboxylic acid" evidence="3">
    <location>
        <position position="1"/>
    </location>
</feature>
<feature type="modified residue" description="Sulfotyrosine" evidence="3">
    <location>
        <position position="6"/>
    </location>
</feature>
<feature type="non-terminal residue">
    <location>
        <position position="18"/>
    </location>
</feature>
<reference key="1">
    <citation type="journal article" date="1985" name="Sci. Sin., Ser. B Chem. Biol. Agric. Med. Earth Sci.">
        <title>Purification and primary structures of duck fibrinopeptides A and B.</title>
        <authorList>
            <person name="Min Y."/>
            <person name="Ping Z."/>
            <person name="Yaoshi Z."/>
        </authorList>
    </citation>
    <scope>PROTEIN SEQUENCE</scope>
    <scope>PYROGLUTAMATE FORMATION AT GLN-1</scope>
    <scope>SULFATION AT TYR-6</scope>
</reference>
<sequence>QASTDYDDEDESTVPEAR</sequence>
<organism>
    <name type="scientific">Anas platyrhynchos</name>
    <name type="common">Mallard</name>
    <name type="synonym">Anas boschas</name>
    <dbReference type="NCBI Taxonomy" id="8839"/>
    <lineage>
        <taxon>Eukaryota</taxon>
        <taxon>Metazoa</taxon>
        <taxon>Chordata</taxon>
        <taxon>Craniata</taxon>
        <taxon>Vertebrata</taxon>
        <taxon>Euteleostomi</taxon>
        <taxon>Archelosauria</taxon>
        <taxon>Archosauria</taxon>
        <taxon>Dinosauria</taxon>
        <taxon>Saurischia</taxon>
        <taxon>Theropoda</taxon>
        <taxon>Coelurosauria</taxon>
        <taxon>Aves</taxon>
        <taxon>Neognathae</taxon>
        <taxon>Galloanserae</taxon>
        <taxon>Anseriformes</taxon>
        <taxon>Anatidae</taxon>
        <taxon>Anatinae</taxon>
        <taxon>Anas</taxon>
    </lineage>
</organism>
<proteinExistence type="evidence at protein level"/>